<sequence length="245" mass="28296">MIIVSGQLLRPQDIENWQIDQDLNPLLKEMIETPVQFDYHSIAELMFELKLRMNIVAAAKTLHKSGAKFATFLKTYGNTTYWRVSPEGALELKYRMPPSKAIRDIAENGPFYAFECATAIVIIYYLALIDTIGEDKFNASFDRIILYDWHYEKLPIYTETGHHFFLGDCLYFKNPEFDPQKAQWRGENVILLGEDKYFAHGLGILNGKQIIDKLNSFRKKGALQSAYLLSQATRLDVPSLFRIVR</sequence>
<proteinExistence type="evidence at protein level"/>
<dbReference type="EC" id="2.3.2.13"/>
<dbReference type="EMBL" id="Z93935">
    <property type="protein sequence ID" value="CAB07928.1"/>
    <property type="molecule type" value="Genomic_DNA"/>
</dbReference>
<dbReference type="EMBL" id="AL009126">
    <property type="protein sequence ID" value="CAB15105.1"/>
    <property type="molecule type" value="Genomic_DNA"/>
</dbReference>
<dbReference type="EMBL" id="L29189">
    <property type="protein sequence ID" value="AAA20553.1"/>
    <property type="molecule type" value="Genomic_DNA"/>
</dbReference>
<dbReference type="PIR" id="JE0179">
    <property type="entry name" value="JE0179"/>
</dbReference>
<dbReference type="RefSeq" id="NP_391005.1">
    <property type="nucleotide sequence ID" value="NC_000964.3"/>
</dbReference>
<dbReference type="RefSeq" id="WP_003243977.1">
    <property type="nucleotide sequence ID" value="NZ_OZ025638.1"/>
</dbReference>
<dbReference type="PDB" id="4P8I">
    <property type="method" value="X-ray"/>
    <property type="resolution" value="1.85 A"/>
    <property type="chains" value="A/B=1-245"/>
</dbReference>
<dbReference type="PDB" id="4PA5">
    <property type="method" value="X-ray"/>
    <property type="resolution" value="1.86 A"/>
    <property type="chains" value="A/B=1-245"/>
</dbReference>
<dbReference type="PDBsum" id="4P8I"/>
<dbReference type="PDBsum" id="4PA5"/>
<dbReference type="SMR" id="P40746"/>
<dbReference type="FunCoup" id="P40746">
    <property type="interactions" value="6"/>
</dbReference>
<dbReference type="STRING" id="224308.BSU31270"/>
<dbReference type="PaxDb" id="224308-BSU31270"/>
<dbReference type="EnsemblBacteria" id="CAB15105">
    <property type="protein sequence ID" value="CAB15105"/>
    <property type="gene ID" value="BSU_31270"/>
</dbReference>
<dbReference type="GeneID" id="937158"/>
<dbReference type="KEGG" id="bsu:BSU31270"/>
<dbReference type="PATRIC" id="fig|224308.179.peg.3387"/>
<dbReference type="eggNOG" id="ENOG502Z8C5">
    <property type="taxonomic scope" value="Bacteria"/>
</dbReference>
<dbReference type="InParanoid" id="P40746"/>
<dbReference type="OrthoDB" id="1845399at2"/>
<dbReference type="BioCyc" id="BSUB:BSU31270-MONOMER"/>
<dbReference type="BRENDA" id="2.3.2.13">
    <property type="organism ID" value="658"/>
</dbReference>
<dbReference type="EvolutionaryTrace" id="P40746"/>
<dbReference type="Proteomes" id="UP000001570">
    <property type="component" value="Chromosome"/>
</dbReference>
<dbReference type="GO" id="GO:0003810">
    <property type="term" value="F:protein-glutamine gamma-glutamyltransferase activity"/>
    <property type="evidence" value="ECO:0007669"/>
    <property type="project" value="UniProtKB-UniRule"/>
</dbReference>
<dbReference type="GO" id="GO:0030435">
    <property type="term" value="P:sporulation resulting in formation of a cellular spore"/>
    <property type="evidence" value="ECO:0007669"/>
    <property type="project" value="UniProtKB-UniRule"/>
</dbReference>
<dbReference type="HAMAP" id="MF_00727">
    <property type="entry name" value="Tgl"/>
    <property type="match status" value="1"/>
</dbReference>
<dbReference type="InterPro" id="IPR020916">
    <property type="entry name" value="Gln_gamma-glutamylTfrase_bac"/>
</dbReference>
<dbReference type="NCBIfam" id="NF002869">
    <property type="entry name" value="PRK03187.1"/>
    <property type="match status" value="1"/>
</dbReference>
<dbReference type="Pfam" id="PF20085">
    <property type="entry name" value="TGL"/>
    <property type="match status" value="1"/>
</dbReference>
<reference key="1">
    <citation type="journal article" date="1997" name="Microbiology">
        <title>Analysis of the Bacillus subtilis genome: cloning and nucleotide sequence of a 62 kb region between 275 degrees (rrnB) and 284 degrees (pai).</title>
        <authorList>
            <person name="Oudega B."/>
            <person name="Koningstein G."/>
            <person name="Rodrigues L."/>
            <person name="de Sales Ramon M."/>
            <person name="Hilbert H."/>
            <person name="Duesterhoeft A."/>
            <person name="Pohl T.M."/>
            <person name="Weitzenegger T."/>
        </authorList>
    </citation>
    <scope>NUCLEOTIDE SEQUENCE [GENOMIC DNA]</scope>
    <source>
        <strain>168</strain>
    </source>
</reference>
<reference key="2">
    <citation type="journal article" date="1997" name="Nature">
        <title>The complete genome sequence of the Gram-positive bacterium Bacillus subtilis.</title>
        <authorList>
            <person name="Kunst F."/>
            <person name="Ogasawara N."/>
            <person name="Moszer I."/>
            <person name="Albertini A.M."/>
            <person name="Alloni G."/>
            <person name="Azevedo V."/>
            <person name="Bertero M.G."/>
            <person name="Bessieres P."/>
            <person name="Bolotin A."/>
            <person name="Borchert S."/>
            <person name="Borriss R."/>
            <person name="Boursier L."/>
            <person name="Brans A."/>
            <person name="Braun M."/>
            <person name="Brignell S.C."/>
            <person name="Bron S."/>
            <person name="Brouillet S."/>
            <person name="Bruschi C.V."/>
            <person name="Caldwell B."/>
            <person name="Capuano V."/>
            <person name="Carter N.M."/>
            <person name="Choi S.-K."/>
            <person name="Codani J.-J."/>
            <person name="Connerton I.F."/>
            <person name="Cummings N.J."/>
            <person name="Daniel R.A."/>
            <person name="Denizot F."/>
            <person name="Devine K.M."/>
            <person name="Duesterhoeft A."/>
            <person name="Ehrlich S.D."/>
            <person name="Emmerson P.T."/>
            <person name="Entian K.-D."/>
            <person name="Errington J."/>
            <person name="Fabret C."/>
            <person name="Ferrari E."/>
            <person name="Foulger D."/>
            <person name="Fritz C."/>
            <person name="Fujita M."/>
            <person name="Fujita Y."/>
            <person name="Fuma S."/>
            <person name="Galizzi A."/>
            <person name="Galleron N."/>
            <person name="Ghim S.-Y."/>
            <person name="Glaser P."/>
            <person name="Goffeau A."/>
            <person name="Golightly E.J."/>
            <person name="Grandi G."/>
            <person name="Guiseppi G."/>
            <person name="Guy B.J."/>
            <person name="Haga K."/>
            <person name="Haiech J."/>
            <person name="Harwood C.R."/>
            <person name="Henaut A."/>
            <person name="Hilbert H."/>
            <person name="Holsappel S."/>
            <person name="Hosono S."/>
            <person name="Hullo M.-F."/>
            <person name="Itaya M."/>
            <person name="Jones L.-M."/>
            <person name="Joris B."/>
            <person name="Karamata D."/>
            <person name="Kasahara Y."/>
            <person name="Klaerr-Blanchard M."/>
            <person name="Klein C."/>
            <person name="Kobayashi Y."/>
            <person name="Koetter P."/>
            <person name="Koningstein G."/>
            <person name="Krogh S."/>
            <person name="Kumano M."/>
            <person name="Kurita K."/>
            <person name="Lapidus A."/>
            <person name="Lardinois S."/>
            <person name="Lauber J."/>
            <person name="Lazarevic V."/>
            <person name="Lee S.-M."/>
            <person name="Levine A."/>
            <person name="Liu H."/>
            <person name="Masuda S."/>
            <person name="Mauel C."/>
            <person name="Medigue C."/>
            <person name="Medina N."/>
            <person name="Mellado R.P."/>
            <person name="Mizuno M."/>
            <person name="Moestl D."/>
            <person name="Nakai S."/>
            <person name="Noback M."/>
            <person name="Noone D."/>
            <person name="O'Reilly M."/>
            <person name="Ogawa K."/>
            <person name="Ogiwara A."/>
            <person name="Oudega B."/>
            <person name="Park S.-H."/>
            <person name="Parro V."/>
            <person name="Pohl T.M."/>
            <person name="Portetelle D."/>
            <person name="Porwollik S."/>
            <person name="Prescott A.M."/>
            <person name="Presecan E."/>
            <person name="Pujic P."/>
            <person name="Purnelle B."/>
            <person name="Rapoport G."/>
            <person name="Rey M."/>
            <person name="Reynolds S."/>
            <person name="Rieger M."/>
            <person name="Rivolta C."/>
            <person name="Rocha E."/>
            <person name="Roche B."/>
            <person name="Rose M."/>
            <person name="Sadaie Y."/>
            <person name="Sato T."/>
            <person name="Scanlan E."/>
            <person name="Schleich S."/>
            <person name="Schroeter R."/>
            <person name="Scoffone F."/>
            <person name="Sekiguchi J."/>
            <person name="Sekowska A."/>
            <person name="Seror S.J."/>
            <person name="Serror P."/>
            <person name="Shin B.-S."/>
            <person name="Soldo B."/>
            <person name="Sorokin A."/>
            <person name="Tacconi E."/>
            <person name="Takagi T."/>
            <person name="Takahashi H."/>
            <person name="Takemaru K."/>
            <person name="Takeuchi M."/>
            <person name="Tamakoshi A."/>
            <person name="Tanaka T."/>
            <person name="Terpstra P."/>
            <person name="Tognoni A."/>
            <person name="Tosato V."/>
            <person name="Uchiyama S."/>
            <person name="Vandenbol M."/>
            <person name="Vannier F."/>
            <person name="Vassarotti A."/>
            <person name="Viari A."/>
            <person name="Wambutt R."/>
            <person name="Wedler E."/>
            <person name="Wedler H."/>
            <person name="Weitzenegger T."/>
            <person name="Winters P."/>
            <person name="Wipat A."/>
            <person name="Yamamoto H."/>
            <person name="Yamane K."/>
            <person name="Yasumoto K."/>
            <person name="Yata K."/>
            <person name="Yoshida K."/>
            <person name="Yoshikawa H.-F."/>
            <person name="Zumstein E."/>
            <person name="Yoshikawa H."/>
            <person name="Danchin A."/>
        </authorList>
    </citation>
    <scope>NUCLEOTIDE SEQUENCE [LARGE SCALE GENOMIC DNA]</scope>
    <source>
        <strain>168</strain>
    </source>
</reference>
<reference key="3">
    <citation type="journal article" date="1994" name="J. Biol. Chem.">
        <title>Cloning and characterization of genes encoding methyl-accepting chemotaxis proteins in Bacillus subtilis.</title>
        <authorList>
            <person name="Hanlon D.W."/>
            <person name="Ordal G.W."/>
        </authorList>
    </citation>
    <scope>NUCLEOTIDE SEQUENCE [GENOMIC DNA] OF 1-22</scope>
    <source>
        <strain>168 / OI1085</strain>
    </source>
</reference>
<reference key="4">
    <citation type="journal article" date="1998" name="Biosci. Biotechnol. Biochem.">
        <title>Molecular cloning of the transglutaminase gene from Bacillus subtilis and its expression in Escherichia coli.</title>
        <authorList>
            <person name="Kobayashi K."/>
            <person name="Hashiguchi K."/>
            <person name="Yokozeki K."/>
            <person name="Yamanaka S."/>
        </authorList>
    </citation>
    <scope>CHARACTERIZATION</scope>
</reference>
<reference key="5">
    <citation type="journal article" date="1998" name="J. Gen. Appl. Microbiol.">
        <title>Transglutaminase in sporulating cells of Bacillus subtilis.</title>
        <authorList>
            <person name="Kobayashi K."/>
            <person name="Suzuki S.I."/>
            <person name="Izawa Y."/>
            <person name="Miwa K."/>
            <person name="Yamanaka S."/>
        </authorList>
    </citation>
    <scope>CHARACTERIZATION</scope>
</reference>
<reference key="6">
    <citation type="journal article" date="2006" name="J. Biochem.">
        <title>Modification of GerQ reveals a functional relationship between Tgl and YabG in the coat of Bacillus subtilis spores.</title>
        <authorList>
            <person name="Kuwana R."/>
            <person name="Okuda N."/>
            <person name="Takamatsu H."/>
            <person name="Watabe K."/>
        </authorList>
    </citation>
    <scope>RELATIONSHIP BETWEEN YABG AND TGL</scope>
    <scope>DISRUPTION PHENOTYPE</scope>
</reference>
<organism>
    <name type="scientific">Bacillus subtilis (strain 168)</name>
    <dbReference type="NCBI Taxonomy" id="224308"/>
    <lineage>
        <taxon>Bacteria</taxon>
        <taxon>Bacillati</taxon>
        <taxon>Bacillota</taxon>
        <taxon>Bacilli</taxon>
        <taxon>Bacillales</taxon>
        <taxon>Bacillaceae</taxon>
        <taxon>Bacillus</taxon>
    </lineage>
</organism>
<comment type="function">
    <text>Probably plays a role in the assembly of the spore coat proteins by catalyzing epsilon-(gamma-glutamyl)lysine cross-links. In wild-type spores at 37 degrees Celsius, tgl mediates the cross-linking of GerQ in higher molecular mass forms, probably in cooperation with YabG.</text>
</comment>
<comment type="catalytic activity">
    <reaction>
        <text>L-glutaminyl-[protein] + L-lysyl-[protein] = [protein]-L-lysyl-N(6)-5-L-glutamyl-[protein] + NH4(+)</text>
        <dbReference type="Rhea" id="RHEA:54816"/>
        <dbReference type="Rhea" id="RHEA-COMP:9752"/>
        <dbReference type="Rhea" id="RHEA-COMP:10207"/>
        <dbReference type="Rhea" id="RHEA-COMP:14005"/>
        <dbReference type="ChEBI" id="CHEBI:28938"/>
        <dbReference type="ChEBI" id="CHEBI:29969"/>
        <dbReference type="ChEBI" id="CHEBI:30011"/>
        <dbReference type="ChEBI" id="CHEBI:138370"/>
        <dbReference type="EC" id="2.3.2.13"/>
    </reaction>
</comment>
<comment type="developmental stage">
    <text>Expressed during sporulation.</text>
</comment>
<comment type="disruption phenotype">
    <text evidence="1">In cells missing this gene some GerQ multimers are present, indicating that tgl is not essential. Heat treatment for 20 minutes at 60 degrees Celsius, which maximally activates the Tgl enzymatic activity, causes cross-linking of GerQ in isolated yabG-deleted spores but not in tgl/yabG double-mutant spores. Additionally, the germination frequency of the tgl/yabG double-mutant spores in the presence of L-alanine with or without heat activation at 60 degrees Celsius is lower than that of wild-type spores.</text>
</comment>
<comment type="similarity">
    <text evidence="2">Belongs to the bacillus TGase family.</text>
</comment>
<accession>P40746</accession>
<gene>
    <name type="primary">tgl</name>
    <name type="synonym">yugV</name>
    <name type="synonym">yuxF</name>
    <name type="ordered locus">BSU31270</name>
</gene>
<keyword id="KW-0002">3D-structure</keyword>
<keyword id="KW-0012">Acyltransferase</keyword>
<keyword id="KW-1185">Reference proteome</keyword>
<keyword id="KW-0749">Sporulation</keyword>
<keyword id="KW-0808">Transferase</keyword>
<feature type="chain" id="PRO_0000213725" description="Protein-glutamine gamma-glutamyltransferase">
    <location>
        <begin position="1"/>
        <end position="245"/>
    </location>
</feature>
<feature type="strand" evidence="3">
    <location>
        <begin position="2"/>
        <end position="4"/>
    </location>
</feature>
<feature type="strand" evidence="3">
    <location>
        <begin position="7"/>
        <end position="9"/>
    </location>
</feature>
<feature type="helix" evidence="3">
    <location>
        <begin position="21"/>
        <end position="23"/>
    </location>
</feature>
<feature type="helix" evidence="3">
    <location>
        <begin position="24"/>
        <end position="32"/>
    </location>
</feature>
<feature type="strand" evidence="3">
    <location>
        <begin position="33"/>
        <end position="35"/>
    </location>
</feature>
<feature type="strand" evidence="3">
    <location>
        <begin position="37"/>
        <end position="41"/>
    </location>
</feature>
<feature type="helix" evidence="3">
    <location>
        <begin position="42"/>
        <end position="65"/>
    </location>
</feature>
<feature type="helix" evidence="3">
    <location>
        <begin position="72"/>
        <end position="74"/>
    </location>
</feature>
<feature type="turn" evidence="3">
    <location>
        <begin position="79"/>
        <end position="81"/>
    </location>
</feature>
<feature type="strand" evidence="3">
    <location>
        <begin position="82"/>
        <end position="84"/>
    </location>
</feature>
<feature type="strand" evidence="3">
    <location>
        <begin position="90"/>
        <end position="92"/>
    </location>
</feature>
<feature type="helix" evidence="3">
    <location>
        <begin position="98"/>
        <end position="107"/>
    </location>
</feature>
<feature type="helix" evidence="3">
    <location>
        <begin position="109"/>
        <end position="111"/>
    </location>
</feature>
<feature type="helix" evidence="3">
    <location>
        <begin position="116"/>
        <end position="132"/>
    </location>
</feature>
<feature type="helix" evidence="3">
    <location>
        <begin position="134"/>
        <end position="140"/>
    </location>
</feature>
<feature type="strand" evidence="3">
    <location>
        <begin position="145"/>
        <end position="147"/>
    </location>
</feature>
<feature type="strand" evidence="3">
    <location>
        <begin position="150"/>
        <end position="153"/>
    </location>
</feature>
<feature type="strand" evidence="3">
    <location>
        <begin position="156"/>
        <end position="160"/>
    </location>
</feature>
<feature type="strand" evidence="3">
    <location>
        <begin position="169"/>
        <end position="173"/>
    </location>
</feature>
<feature type="helix" evidence="3">
    <location>
        <begin position="182"/>
        <end position="184"/>
    </location>
</feature>
<feature type="strand" evidence="3">
    <location>
        <begin position="185"/>
        <end position="193"/>
    </location>
</feature>
<feature type="strand" evidence="3">
    <location>
        <begin position="196"/>
        <end position="199"/>
    </location>
</feature>
<feature type="turn" evidence="3">
    <location>
        <begin position="200"/>
        <end position="202"/>
    </location>
</feature>
<feature type="strand" evidence="3">
    <location>
        <begin position="203"/>
        <end position="205"/>
    </location>
</feature>
<feature type="helix" evidence="3">
    <location>
        <begin position="207"/>
        <end position="215"/>
    </location>
</feature>
<feature type="strand" evidence="3">
    <location>
        <begin position="230"/>
        <end position="235"/>
    </location>
</feature>
<feature type="helix" evidence="3">
    <location>
        <begin position="237"/>
        <end position="244"/>
    </location>
</feature>
<evidence type="ECO:0000269" key="1">
    <source>
    </source>
</evidence>
<evidence type="ECO:0000305" key="2"/>
<evidence type="ECO:0007829" key="3">
    <source>
        <dbReference type="PDB" id="4P8I"/>
    </source>
</evidence>
<protein>
    <recommendedName>
        <fullName>Protein-glutamine gamma-glutamyltransferase</fullName>
        <ecNumber>2.3.2.13</ecNumber>
    </recommendedName>
    <alternativeName>
        <fullName>Transglutaminase</fullName>
        <shortName>TGase</shortName>
    </alternativeName>
</protein>
<name>TGL_BACSU</name>